<organism>
    <name type="scientific">Rhodopseudomonas palustris (strain HaA2)</name>
    <dbReference type="NCBI Taxonomy" id="316058"/>
    <lineage>
        <taxon>Bacteria</taxon>
        <taxon>Pseudomonadati</taxon>
        <taxon>Pseudomonadota</taxon>
        <taxon>Alphaproteobacteria</taxon>
        <taxon>Hyphomicrobiales</taxon>
        <taxon>Nitrobacteraceae</taxon>
        <taxon>Rhodopseudomonas</taxon>
    </lineage>
</organism>
<sequence>MALQSESPGPVSPSVDPAEIAKFSKLSAQWWDPTGKMAPLHRINPLRISFIRDAACRKFERNAKSLSCLSGLRMLDIGCGAGLLCEPFTRLGAQVIGIDPSATNIAAAKIHADKSHLPIDYRCTTVEEIDPRERFDIVLAMEVIEHVTDVGAFLGRCAALMKPNGIMVVATLNRNWKSFALAIVGAEYVMRWLPRGTHQWDKFVTPAELEQHLHGFGMIVTEQSGLVFNPLADRWKLSADMDVNYMVVAETAP</sequence>
<comment type="function">
    <text evidence="1">O-methyltransferase that catalyzes the 2 O-methylation steps in the ubiquinone biosynthetic pathway.</text>
</comment>
<comment type="catalytic activity">
    <reaction evidence="1">
        <text>a 3-demethylubiquinol + S-adenosyl-L-methionine = a ubiquinol + S-adenosyl-L-homocysteine + H(+)</text>
        <dbReference type="Rhea" id="RHEA:44380"/>
        <dbReference type="Rhea" id="RHEA-COMP:9566"/>
        <dbReference type="Rhea" id="RHEA-COMP:10914"/>
        <dbReference type="ChEBI" id="CHEBI:15378"/>
        <dbReference type="ChEBI" id="CHEBI:17976"/>
        <dbReference type="ChEBI" id="CHEBI:57856"/>
        <dbReference type="ChEBI" id="CHEBI:59789"/>
        <dbReference type="ChEBI" id="CHEBI:84422"/>
        <dbReference type="EC" id="2.1.1.64"/>
    </reaction>
</comment>
<comment type="catalytic activity">
    <reaction evidence="1">
        <text>a 3-(all-trans-polyprenyl)benzene-1,2-diol + S-adenosyl-L-methionine = a 2-methoxy-6-(all-trans-polyprenyl)phenol + S-adenosyl-L-homocysteine + H(+)</text>
        <dbReference type="Rhea" id="RHEA:31411"/>
        <dbReference type="Rhea" id="RHEA-COMP:9550"/>
        <dbReference type="Rhea" id="RHEA-COMP:9551"/>
        <dbReference type="ChEBI" id="CHEBI:15378"/>
        <dbReference type="ChEBI" id="CHEBI:57856"/>
        <dbReference type="ChEBI" id="CHEBI:59789"/>
        <dbReference type="ChEBI" id="CHEBI:62729"/>
        <dbReference type="ChEBI" id="CHEBI:62731"/>
        <dbReference type="EC" id="2.1.1.222"/>
    </reaction>
</comment>
<comment type="pathway">
    <text evidence="1">Cofactor biosynthesis; ubiquinone biosynthesis.</text>
</comment>
<comment type="similarity">
    <text evidence="1">Belongs to the methyltransferase superfamily. UbiG/COQ3 family.</text>
</comment>
<evidence type="ECO:0000255" key="1">
    <source>
        <dbReference type="HAMAP-Rule" id="MF_00472"/>
    </source>
</evidence>
<name>UBIG_RHOP2</name>
<reference key="1">
    <citation type="submission" date="2006-01" db="EMBL/GenBank/DDBJ databases">
        <title>Complete sequence of Rhodopseudomonas palustris HaA2.</title>
        <authorList>
            <consortium name="US DOE Joint Genome Institute"/>
            <person name="Copeland A."/>
            <person name="Lucas S."/>
            <person name="Lapidus A."/>
            <person name="Barry K."/>
            <person name="Detter J.C."/>
            <person name="Glavina T."/>
            <person name="Hammon N."/>
            <person name="Israni S."/>
            <person name="Pitluck S."/>
            <person name="Chain P."/>
            <person name="Malfatti S."/>
            <person name="Shin M."/>
            <person name="Vergez L."/>
            <person name="Schmutz J."/>
            <person name="Larimer F."/>
            <person name="Land M."/>
            <person name="Hauser L."/>
            <person name="Pelletier D.A."/>
            <person name="Kyrpides N."/>
            <person name="Anderson I."/>
            <person name="Oda Y."/>
            <person name="Harwood C.S."/>
            <person name="Richardson P."/>
        </authorList>
    </citation>
    <scope>NUCLEOTIDE SEQUENCE [LARGE SCALE GENOMIC DNA]</scope>
    <source>
        <strain>HaA2</strain>
    </source>
</reference>
<gene>
    <name evidence="1" type="primary">ubiG</name>
    <name type="ordered locus">RPB_0079</name>
</gene>
<accession>Q2J419</accession>
<protein>
    <recommendedName>
        <fullName evidence="1">Ubiquinone biosynthesis O-methyltransferase</fullName>
    </recommendedName>
    <alternativeName>
        <fullName evidence="1">2-polyprenyl-6-hydroxyphenol methylase</fullName>
        <ecNumber evidence="1">2.1.1.222</ecNumber>
    </alternativeName>
    <alternativeName>
        <fullName evidence="1">3-demethylubiquinone 3-O-methyltransferase</fullName>
        <ecNumber evidence="1">2.1.1.64</ecNumber>
    </alternativeName>
</protein>
<feature type="chain" id="PRO_0000241729" description="Ubiquinone biosynthesis O-methyltransferase">
    <location>
        <begin position="1"/>
        <end position="253"/>
    </location>
</feature>
<feature type="binding site" evidence="1">
    <location>
        <position position="47"/>
    </location>
    <ligand>
        <name>S-adenosyl-L-methionine</name>
        <dbReference type="ChEBI" id="CHEBI:59789"/>
    </ligand>
</feature>
<feature type="binding site" evidence="1">
    <location>
        <position position="78"/>
    </location>
    <ligand>
        <name>S-adenosyl-L-methionine</name>
        <dbReference type="ChEBI" id="CHEBI:59789"/>
    </ligand>
</feature>
<feature type="binding site" evidence="1">
    <location>
        <position position="99"/>
    </location>
    <ligand>
        <name>S-adenosyl-L-methionine</name>
        <dbReference type="ChEBI" id="CHEBI:59789"/>
    </ligand>
</feature>
<feature type="binding site" evidence="1">
    <location>
        <position position="141"/>
    </location>
    <ligand>
        <name>S-adenosyl-L-methionine</name>
        <dbReference type="ChEBI" id="CHEBI:59789"/>
    </ligand>
</feature>
<proteinExistence type="inferred from homology"/>
<dbReference type="EC" id="2.1.1.222" evidence="1"/>
<dbReference type="EC" id="2.1.1.64" evidence="1"/>
<dbReference type="EMBL" id="CP000250">
    <property type="protein sequence ID" value="ABD04791.1"/>
    <property type="molecule type" value="Genomic_DNA"/>
</dbReference>
<dbReference type="RefSeq" id="WP_011438981.1">
    <property type="nucleotide sequence ID" value="NC_007778.1"/>
</dbReference>
<dbReference type="SMR" id="Q2J419"/>
<dbReference type="STRING" id="316058.RPB_0079"/>
<dbReference type="KEGG" id="rpb:RPB_0079"/>
<dbReference type="eggNOG" id="COG2227">
    <property type="taxonomic scope" value="Bacteria"/>
</dbReference>
<dbReference type="HOGENOM" id="CLU_042432_0_0_5"/>
<dbReference type="OrthoDB" id="9801538at2"/>
<dbReference type="UniPathway" id="UPA00232"/>
<dbReference type="Proteomes" id="UP000008809">
    <property type="component" value="Chromosome"/>
</dbReference>
<dbReference type="GO" id="GO:0102208">
    <property type="term" value="F:2-polyprenyl-6-hydroxyphenol methylase activity"/>
    <property type="evidence" value="ECO:0007669"/>
    <property type="project" value="UniProtKB-EC"/>
</dbReference>
<dbReference type="GO" id="GO:0061542">
    <property type="term" value="F:3-demethylubiquinol 3-O-methyltransferase activity"/>
    <property type="evidence" value="ECO:0007669"/>
    <property type="project" value="UniProtKB-UniRule"/>
</dbReference>
<dbReference type="GO" id="GO:0010420">
    <property type="term" value="F:polyprenyldihydroxybenzoate methyltransferase activity"/>
    <property type="evidence" value="ECO:0007669"/>
    <property type="project" value="InterPro"/>
</dbReference>
<dbReference type="GO" id="GO:0032259">
    <property type="term" value="P:methylation"/>
    <property type="evidence" value="ECO:0007669"/>
    <property type="project" value="UniProtKB-KW"/>
</dbReference>
<dbReference type="CDD" id="cd02440">
    <property type="entry name" value="AdoMet_MTases"/>
    <property type="match status" value="1"/>
</dbReference>
<dbReference type="Gene3D" id="3.40.50.150">
    <property type="entry name" value="Vaccinia Virus protein VP39"/>
    <property type="match status" value="1"/>
</dbReference>
<dbReference type="HAMAP" id="MF_00472">
    <property type="entry name" value="UbiG"/>
    <property type="match status" value="1"/>
</dbReference>
<dbReference type="InterPro" id="IPR029063">
    <property type="entry name" value="SAM-dependent_MTases_sf"/>
</dbReference>
<dbReference type="InterPro" id="IPR010233">
    <property type="entry name" value="UbiG_MeTrfase"/>
</dbReference>
<dbReference type="NCBIfam" id="TIGR01983">
    <property type="entry name" value="UbiG"/>
    <property type="match status" value="1"/>
</dbReference>
<dbReference type="PANTHER" id="PTHR43464">
    <property type="entry name" value="METHYLTRANSFERASE"/>
    <property type="match status" value="1"/>
</dbReference>
<dbReference type="PANTHER" id="PTHR43464:SF19">
    <property type="entry name" value="UBIQUINONE BIOSYNTHESIS O-METHYLTRANSFERASE, MITOCHONDRIAL"/>
    <property type="match status" value="1"/>
</dbReference>
<dbReference type="Pfam" id="PF13489">
    <property type="entry name" value="Methyltransf_23"/>
    <property type="match status" value="1"/>
</dbReference>
<dbReference type="SUPFAM" id="SSF53335">
    <property type="entry name" value="S-adenosyl-L-methionine-dependent methyltransferases"/>
    <property type="match status" value="1"/>
</dbReference>
<keyword id="KW-0489">Methyltransferase</keyword>
<keyword id="KW-1185">Reference proteome</keyword>
<keyword id="KW-0949">S-adenosyl-L-methionine</keyword>
<keyword id="KW-0808">Transferase</keyword>
<keyword id="KW-0831">Ubiquinone biosynthesis</keyword>